<accession>Q41558</accession>
<organism>
    <name type="scientific">Triticum aestivum</name>
    <name type="common">Wheat</name>
    <dbReference type="NCBI Taxonomy" id="4565"/>
    <lineage>
        <taxon>Eukaryota</taxon>
        <taxon>Viridiplantae</taxon>
        <taxon>Streptophyta</taxon>
        <taxon>Embryophyta</taxon>
        <taxon>Tracheophyta</taxon>
        <taxon>Spermatophyta</taxon>
        <taxon>Magnoliopsida</taxon>
        <taxon>Liliopsida</taxon>
        <taxon>Poales</taxon>
        <taxon>Poaceae</taxon>
        <taxon>BOP clade</taxon>
        <taxon>Pooideae</taxon>
        <taxon>Triticodae</taxon>
        <taxon>Triticeae</taxon>
        <taxon>Triticinae</taxon>
        <taxon>Triticum</taxon>
    </lineage>
</organism>
<dbReference type="EMBL" id="D12921">
    <property type="protein sequence ID" value="BAA02305.2"/>
    <property type="molecule type" value="mRNA"/>
</dbReference>
<dbReference type="PIR" id="C54415">
    <property type="entry name" value="C54415"/>
</dbReference>
<dbReference type="SMR" id="Q41558"/>
<dbReference type="STRING" id="4565.Q41558"/>
<dbReference type="PaxDb" id="4565-Traes_3AL_5490CF370.1"/>
<dbReference type="eggNOG" id="ENOG502QU32">
    <property type="taxonomic scope" value="Eukaryota"/>
</dbReference>
<dbReference type="OMA" id="NNMQPTQ"/>
<dbReference type="Proteomes" id="UP000019116">
    <property type="component" value="Unplaced"/>
</dbReference>
<dbReference type="ExpressionAtlas" id="Q41558">
    <property type="expression patterns" value="baseline and differential"/>
</dbReference>
<dbReference type="GO" id="GO:0005634">
    <property type="term" value="C:nucleus"/>
    <property type="evidence" value="ECO:0007669"/>
    <property type="project" value="UniProtKB-SubCell"/>
</dbReference>
<dbReference type="GO" id="GO:0003700">
    <property type="term" value="F:DNA-binding transcription factor activity"/>
    <property type="evidence" value="ECO:0007669"/>
    <property type="project" value="InterPro"/>
</dbReference>
<dbReference type="GO" id="GO:0043565">
    <property type="term" value="F:sequence-specific DNA binding"/>
    <property type="evidence" value="ECO:0007669"/>
    <property type="project" value="InterPro"/>
</dbReference>
<dbReference type="GO" id="GO:0006351">
    <property type="term" value="P:DNA-templated transcription"/>
    <property type="evidence" value="ECO:0007669"/>
    <property type="project" value="InterPro"/>
</dbReference>
<dbReference type="CDD" id="cd14708">
    <property type="entry name" value="bZIP_HBP1b-like"/>
    <property type="match status" value="1"/>
</dbReference>
<dbReference type="FunFam" id="1.20.5.170:FF:000019">
    <property type="entry name" value="BZIP family transcription factor"/>
    <property type="match status" value="1"/>
</dbReference>
<dbReference type="Gene3D" id="1.20.5.170">
    <property type="match status" value="1"/>
</dbReference>
<dbReference type="InterPro" id="IPR004827">
    <property type="entry name" value="bZIP"/>
</dbReference>
<dbReference type="InterPro" id="IPR046347">
    <property type="entry name" value="bZIP_sf"/>
</dbReference>
<dbReference type="InterPro" id="IPR025422">
    <property type="entry name" value="TGA_domain"/>
</dbReference>
<dbReference type="PANTHER" id="PTHR45693">
    <property type="entry name" value="TRANSCRIPTION FACTOR TGA9"/>
    <property type="match status" value="1"/>
</dbReference>
<dbReference type="PANTHER" id="PTHR45693:SF48">
    <property type="entry name" value="TRANSCRIPTION FACTOR TGAL1"/>
    <property type="match status" value="1"/>
</dbReference>
<dbReference type="Pfam" id="PF00170">
    <property type="entry name" value="bZIP_1"/>
    <property type="match status" value="1"/>
</dbReference>
<dbReference type="Pfam" id="PF14144">
    <property type="entry name" value="DOG1"/>
    <property type="match status" value="1"/>
</dbReference>
<dbReference type="SMART" id="SM00338">
    <property type="entry name" value="BRLZ"/>
    <property type="match status" value="1"/>
</dbReference>
<dbReference type="SUPFAM" id="SSF57959">
    <property type="entry name" value="Leucine zipper domain"/>
    <property type="match status" value="1"/>
</dbReference>
<dbReference type="PROSITE" id="PS50217">
    <property type="entry name" value="BZIP"/>
    <property type="match status" value="1"/>
</dbReference>
<dbReference type="PROSITE" id="PS00036">
    <property type="entry name" value="BZIP_BASIC"/>
    <property type="match status" value="1"/>
</dbReference>
<dbReference type="PROSITE" id="PS51806">
    <property type="entry name" value="DOG1"/>
    <property type="match status" value="1"/>
</dbReference>
<evidence type="ECO:0000255" key="1"/>
<evidence type="ECO:0000255" key="2">
    <source>
        <dbReference type="PROSITE-ProRule" id="PRU00978"/>
    </source>
</evidence>
<evidence type="ECO:0000255" key="3">
    <source>
        <dbReference type="PROSITE-ProRule" id="PRU01147"/>
    </source>
</evidence>
<evidence type="ECO:0000256" key="4">
    <source>
        <dbReference type="SAM" id="MobiDB-lite"/>
    </source>
</evidence>
<evidence type="ECO:0000305" key="5"/>
<comment type="function">
    <text>Transcriptional activator that binds specifically to the DNA sequence 5'-TGACG-3'. Recognizes ocs elements like the as-1 motif of the cauliflower mosaic virus 35S promoter. Binding to the as-1-like cis elements mediate auxin- and salicylic acid-inducible transcription. Binds to the hexamer motif 5'-ACGTCA-3' of histone gene promoters.</text>
</comment>
<comment type="subunit">
    <text>Binds DNA as a dimer.</text>
</comment>
<comment type="subcellular location">
    <subcellularLocation>
        <location>Nucleus</location>
    </subcellularLocation>
</comment>
<comment type="similarity">
    <text evidence="5">Belongs to the bZIP family.</text>
</comment>
<feature type="chain" id="PRO_0000076552" description="Transcription factor HBP-1b(c1)">
    <location>
        <begin position="1" status="less than"/>
        <end position="476"/>
    </location>
</feature>
<feature type="domain" description="bZIP" evidence="2">
    <location>
        <begin position="189"/>
        <end position="252"/>
    </location>
</feature>
<feature type="domain" description="DOG1" evidence="3">
    <location>
        <begin position="256"/>
        <end position="473"/>
    </location>
</feature>
<feature type="region of interest" description="Disordered" evidence="4">
    <location>
        <begin position="1"/>
        <end position="29"/>
    </location>
</feature>
<feature type="region of interest" description="Disordered" evidence="4">
    <location>
        <begin position="133"/>
        <end position="159"/>
    </location>
</feature>
<feature type="region of interest" description="Disordered" evidence="4">
    <location>
        <begin position="171"/>
        <end position="207"/>
    </location>
</feature>
<feature type="region of interest" description="Basic motif" evidence="2">
    <location>
        <begin position="191"/>
        <end position="211"/>
    </location>
</feature>
<feature type="region of interest" description="Leucine-zipper" evidence="2">
    <location>
        <begin position="217"/>
        <end position="231"/>
    </location>
</feature>
<feature type="coiled-coil region" evidence="1">
    <location>
        <begin position="201"/>
        <end position="242"/>
    </location>
</feature>
<feature type="compositionally biased region" description="Low complexity" evidence="4">
    <location>
        <begin position="10"/>
        <end position="25"/>
    </location>
</feature>
<feature type="compositionally biased region" description="Polar residues" evidence="4">
    <location>
        <begin position="135"/>
        <end position="144"/>
    </location>
</feature>
<feature type="compositionally biased region" description="Basic and acidic residues" evidence="4">
    <location>
        <begin position="180"/>
        <end position="191"/>
    </location>
</feature>
<feature type="non-terminal residue">
    <location>
        <position position="1"/>
    </location>
</feature>
<name>HBP1C_WHEAT</name>
<sequence length="476" mass="51787">ESRRGGGGPAAAAAAAGDPRGPMPGFGAPQHTIPTNVNVMQPSRVADLGALAHSAGFRIEDLANFSTNNLFNLKPNTHAYTSDPLQFGNYGKSISPTDLATTAAAAAAVTAVDPQALLQQKGVQPNLVALRTHNNDNWGESSMADTSPRTDTSTDPDIDIDERNQMFEQGQLAAPTASDSSDKSRDKLDHKSLRRLAQNREAARKSRLRKKAYIQNLESSRLKLTQLEQELQRARQQGIFISSSGDQSQSASGNGAVAFDMEYARWLEEHNKHINELRAAANAHAGDDDLRKIVDSIMSQYDEFFRLKGVAAKADVFHVLSGMWKTPAERCFMWLGGFRSSELLKLLAGQLEPLTEQQLTGICNLQQSSQQAEDALSQGMEALQQSLAETLASGSLGPAGSSGNVASYMGQMAMAMGKLGTLENFLRQADNLRLQTLQQMQRILTTRQSARALLAISDYFSRLRALSSLWLARPRE</sequence>
<protein>
    <recommendedName>
        <fullName>Transcription factor HBP-1b(c1)</fullName>
    </recommendedName>
</protein>
<proteinExistence type="evidence at protein level"/>
<keyword id="KW-0010">Activator</keyword>
<keyword id="KW-0175">Coiled coil</keyword>
<keyword id="KW-0238">DNA-binding</keyword>
<keyword id="KW-0539">Nucleus</keyword>
<keyword id="KW-1185">Reference proteome</keyword>
<keyword id="KW-0804">Transcription</keyword>
<keyword id="KW-0805">Transcription regulation</keyword>
<reference key="1">
    <citation type="journal article" date="1994" name="J. Biol. Chem.">
        <title>The HBP-1 family of wheat basic/leucine zipper proteins interacts with overlapping cis-acting hexamer motifs of plant histone genes.</title>
        <authorList>
            <person name="Mikami K."/>
            <person name="Sakamoto A."/>
            <person name="Iwabuchi M."/>
        </authorList>
    </citation>
    <scope>NUCLEOTIDE SEQUENCE [MRNA]</scope>
    <scope>DNA-BINDING</scope>
    <source>
        <strain>cv. Horoshirikomugi</strain>
    </source>
</reference>